<organism>
    <name type="scientific">Pseudomonas syringae pv. tomato (strain ATCC BAA-871 / DC3000)</name>
    <dbReference type="NCBI Taxonomy" id="223283"/>
    <lineage>
        <taxon>Bacteria</taxon>
        <taxon>Pseudomonadati</taxon>
        <taxon>Pseudomonadota</taxon>
        <taxon>Gammaproteobacteria</taxon>
        <taxon>Pseudomonadales</taxon>
        <taxon>Pseudomonadaceae</taxon>
        <taxon>Pseudomonas</taxon>
    </lineage>
</organism>
<sequence length="159" mass="18872">MIDPDGFRPNVGIILTNDAGQVLWARRINQDAWQFPQGGINPQETPEDALYRELNEEVGLERHDVQILACTRGWLRYRLPQRLVRTHSQPLCIGQKQKWFLLRLISNEQRVRMDLTGKPEFDGWRWVSYWYPLGQVVTFKREVYRRALKELAPRLLSRD</sequence>
<protein>
    <recommendedName>
        <fullName evidence="1">RNA pyrophosphohydrolase</fullName>
        <ecNumber evidence="1">3.6.1.-</ecNumber>
    </recommendedName>
    <alternativeName>
        <fullName evidence="1">(Di)nucleoside polyphosphate hydrolase</fullName>
    </alternativeName>
</protein>
<gene>
    <name evidence="1" type="primary">rppH</name>
    <name evidence="1" type="synonym">nudH</name>
    <name type="ordered locus">PSPTO_5285</name>
</gene>
<name>RPPH_PSESM</name>
<accession>Q87UL1</accession>
<feature type="chain" id="PRO_0000057019" description="RNA pyrophosphohydrolase">
    <location>
        <begin position="1"/>
        <end position="159"/>
    </location>
</feature>
<feature type="domain" description="Nudix hydrolase" evidence="1">
    <location>
        <begin position="6"/>
        <end position="149"/>
    </location>
</feature>
<feature type="short sequence motif" description="Nudix box">
    <location>
        <begin position="38"/>
        <end position="59"/>
    </location>
</feature>
<reference key="1">
    <citation type="journal article" date="2003" name="Proc. Natl. Acad. Sci. U.S.A.">
        <title>The complete genome sequence of the Arabidopsis and tomato pathogen Pseudomonas syringae pv. tomato DC3000.</title>
        <authorList>
            <person name="Buell C.R."/>
            <person name="Joardar V."/>
            <person name="Lindeberg M."/>
            <person name="Selengut J."/>
            <person name="Paulsen I.T."/>
            <person name="Gwinn M.L."/>
            <person name="Dodson R.J."/>
            <person name="DeBoy R.T."/>
            <person name="Durkin A.S."/>
            <person name="Kolonay J.F."/>
            <person name="Madupu R."/>
            <person name="Daugherty S.C."/>
            <person name="Brinkac L.M."/>
            <person name="Beanan M.J."/>
            <person name="Haft D.H."/>
            <person name="Nelson W.C."/>
            <person name="Davidsen T.M."/>
            <person name="Zafar N."/>
            <person name="Zhou L."/>
            <person name="Liu J."/>
            <person name="Yuan Q."/>
            <person name="Khouri H.M."/>
            <person name="Fedorova N.B."/>
            <person name="Tran B."/>
            <person name="Russell D."/>
            <person name="Berry K.J."/>
            <person name="Utterback T.R."/>
            <person name="Van Aken S.E."/>
            <person name="Feldblyum T.V."/>
            <person name="D'Ascenzo M."/>
            <person name="Deng W.-L."/>
            <person name="Ramos A.R."/>
            <person name="Alfano J.R."/>
            <person name="Cartinhour S."/>
            <person name="Chatterjee A.K."/>
            <person name="Delaney T.P."/>
            <person name="Lazarowitz S.G."/>
            <person name="Martin G.B."/>
            <person name="Schneider D.J."/>
            <person name="Tang X."/>
            <person name="Bender C.L."/>
            <person name="White O."/>
            <person name="Fraser C.M."/>
            <person name="Collmer A."/>
        </authorList>
    </citation>
    <scope>NUCLEOTIDE SEQUENCE [LARGE SCALE GENOMIC DNA]</scope>
    <source>
        <strain>ATCC BAA-871 / DC3000</strain>
    </source>
</reference>
<dbReference type="EC" id="3.6.1.-" evidence="1"/>
<dbReference type="EMBL" id="AE016853">
    <property type="protein sequence ID" value="AAO58711.1"/>
    <property type="molecule type" value="Genomic_DNA"/>
</dbReference>
<dbReference type="RefSeq" id="NP_795016.1">
    <property type="nucleotide sequence ID" value="NC_004578.1"/>
</dbReference>
<dbReference type="RefSeq" id="WP_002555745.1">
    <property type="nucleotide sequence ID" value="NC_004578.1"/>
</dbReference>
<dbReference type="SMR" id="Q87UL1"/>
<dbReference type="STRING" id="223283.PSPTO_5285"/>
<dbReference type="KEGG" id="pst:PSPTO_5285"/>
<dbReference type="PATRIC" id="fig|223283.9.peg.5411"/>
<dbReference type="eggNOG" id="COG0494">
    <property type="taxonomic scope" value="Bacteria"/>
</dbReference>
<dbReference type="HOGENOM" id="CLU_087195_3_1_6"/>
<dbReference type="OrthoDB" id="9816040at2"/>
<dbReference type="PhylomeDB" id="Q87UL1"/>
<dbReference type="Proteomes" id="UP000002515">
    <property type="component" value="Chromosome"/>
</dbReference>
<dbReference type="GO" id="GO:0005737">
    <property type="term" value="C:cytoplasm"/>
    <property type="evidence" value="ECO:0007669"/>
    <property type="project" value="TreeGrafter"/>
</dbReference>
<dbReference type="GO" id="GO:0034353">
    <property type="term" value="F:mRNA 5'-diphosphatase activity"/>
    <property type="evidence" value="ECO:0007669"/>
    <property type="project" value="TreeGrafter"/>
</dbReference>
<dbReference type="GO" id="GO:0006402">
    <property type="term" value="P:mRNA catabolic process"/>
    <property type="evidence" value="ECO:0007669"/>
    <property type="project" value="TreeGrafter"/>
</dbReference>
<dbReference type="CDD" id="cd03671">
    <property type="entry name" value="NUDIX_Ap4A_hydrolase_plant_like"/>
    <property type="match status" value="1"/>
</dbReference>
<dbReference type="FunFam" id="3.90.79.10:FF:000001">
    <property type="entry name" value="RNA pyrophosphohydrolase"/>
    <property type="match status" value="1"/>
</dbReference>
<dbReference type="Gene3D" id="3.90.79.10">
    <property type="entry name" value="Nucleoside Triphosphate Pyrophosphohydrolase"/>
    <property type="match status" value="1"/>
</dbReference>
<dbReference type="HAMAP" id="MF_00298">
    <property type="entry name" value="Nudix_RppH"/>
    <property type="match status" value="1"/>
</dbReference>
<dbReference type="InterPro" id="IPR020476">
    <property type="entry name" value="Nudix_hydrolase"/>
</dbReference>
<dbReference type="InterPro" id="IPR015797">
    <property type="entry name" value="NUDIX_hydrolase-like_dom_sf"/>
</dbReference>
<dbReference type="InterPro" id="IPR020084">
    <property type="entry name" value="NUDIX_hydrolase_CS"/>
</dbReference>
<dbReference type="InterPro" id="IPR000086">
    <property type="entry name" value="NUDIX_hydrolase_dom"/>
</dbReference>
<dbReference type="InterPro" id="IPR022927">
    <property type="entry name" value="RppH"/>
</dbReference>
<dbReference type="NCBIfam" id="NF001934">
    <property type="entry name" value="PRK00714.1-1"/>
    <property type="match status" value="1"/>
</dbReference>
<dbReference type="NCBIfam" id="NF001937">
    <property type="entry name" value="PRK00714.1-4"/>
    <property type="match status" value="1"/>
</dbReference>
<dbReference type="NCBIfam" id="NF001938">
    <property type="entry name" value="PRK00714.1-5"/>
    <property type="match status" value="1"/>
</dbReference>
<dbReference type="PANTHER" id="PTHR23114">
    <property type="entry name" value="M7GPPPN-MRNA HYDROLASE"/>
    <property type="match status" value="1"/>
</dbReference>
<dbReference type="PANTHER" id="PTHR23114:SF17">
    <property type="entry name" value="M7GPPPN-MRNA HYDROLASE"/>
    <property type="match status" value="1"/>
</dbReference>
<dbReference type="Pfam" id="PF00293">
    <property type="entry name" value="NUDIX"/>
    <property type="match status" value="1"/>
</dbReference>
<dbReference type="PRINTS" id="PR00502">
    <property type="entry name" value="NUDIXFAMILY"/>
</dbReference>
<dbReference type="SUPFAM" id="SSF55811">
    <property type="entry name" value="Nudix"/>
    <property type="match status" value="1"/>
</dbReference>
<dbReference type="PROSITE" id="PS51462">
    <property type="entry name" value="NUDIX"/>
    <property type="match status" value="1"/>
</dbReference>
<dbReference type="PROSITE" id="PS00893">
    <property type="entry name" value="NUDIX_BOX"/>
    <property type="match status" value="1"/>
</dbReference>
<keyword id="KW-0378">Hydrolase</keyword>
<keyword id="KW-1185">Reference proteome</keyword>
<evidence type="ECO:0000255" key="1">
    <source>
        <dbReference type="HAMAP-Rule" id="MF_00298"/>
    </source>
</evidence>
<comment type="function">
    <text evidence="1">Accelerates the degradation of transcripts by removing pyrophosphate from the 5'-end of triphosphorylated RNA, leading to a more labile monophosphorylated state that can stimulate subsequent ribonuclease cleavage.</text>
</comment>
<comment type="cofactor">
    <cofactor evidence="1">
        <name>a divalent metal cation</name>
        <dbReference type="ChEBI" id="CHEBI:60240"/>
    </cofactor>
</comment>
<comment type="similarity">
    <text evidence="1">Belongs to the Nudix hydrolase family. RppH subfamily.</text>
</comment>
<proteinExistence type="inferred from homology"/>